<evidence type="ECO:0000250" key="1">
    <source>
        <dbReference type="UniProtKB" id="Q8R066"/>
    </source>
</evidence>
<evidence type="ECO:0000255" key="2">
    <source>
        <dbReference type="PROSITE-ProRule" id="PRU00368"/>
    </source>
</evidence>
<evidence type="ECO:0000256" key="3">
    <source>
        <dbReference type="SAM" id="MobiDB-lite"/>
    </source>
</evidence>
<evidence type="ECO:0000269" key="4">
    <source>
    </source>
</evidence>
<evidence type="ECO:0000269" key="5">
    <source>
    </source>
</evidence>
<evidence type="ECO:0000269" key="6">
    <source>
    </source>
</evidence>
<evidence type="ECO:0000269" key="7">
    <source>
    </source>
</evidence>
<evidence type="ECO:0000269" key="8">
    <source>
    </source>
</evidence>
<evidence type="ECO:0000303" key="9">
    <source>
    </source>
</evidence>
<evidence type="ECO:0000305" key="10"/>
<dbReference type="EMBL" id="AF329838">
    <property type="protein sequence ID" value="AAK17962.1"/>
    <property type="molecule type" value="mRNA"/>
</dbReference>
<dbReference type="EMBL" id="BC035628">
    <property type="protein sequence ID" value="AAH35628.1"/>
    <property type="molecule type" value="mRNA"/>
</dbReference>
<dbReference type="CCDS" id="CCDS7942.1"/>
<dbReference type="RefSeq" id="NP_114115.2">
    <property type="nucleotide sequence ID" value="NM_031909.3"/>
</dbReference>
<dbReference type="RefSeq" id="XP_016872654.1">
    <property type="nucleotide sequence ID" value="XM_017017165.1"/>
</dbReference>
<dbReference type="RefSeq" id="XP_016872655.1">
    <property type="nucleotide sequence ID" value="XM_017017166.2"/>
</dbReference>
<dbReference type="RefSeq" id="XP_054188378.1">
    <property type="nucleotide sequence ID" value="XM_054332403.1"/>
</dbReference>
<dbReference type="RefSeq" id="XP_054188379.1">
    <property type="nucleotide sequence ID" value="XM_054332404.1"/>
</dbReference>
<dbReference type="RefSeq" id="XP_054223570.1">
    <property type="nucleotide sequence ID" value="XM_054367595.1"/>
</dbReference>
<dbReference type="RefSeq" id="XP_054223571.1">
    <property type="nucleotide sequence ID" value="XM_054367596.1"/>
</dbReference>
<dbReference type="SMR" id="Q9BXJ3"/>
<dbReference type="BioGRID" id="125391">
    <property type="interactions" value="5"/>
</dbReference>
<dbReference type="FunCoup" id="Q9BXJ3">
    <property type="interactions" value="159"/>
</dbReference>
<dbReference type="IntAct" id="Q9BXJ3">
    <property type="interactions" value="6"/>
</dbReference>
<dbReference type="STRING" id="9606.ENSP00000302274"/>
<dbReference type="GlyGen" id="Q9BXJ3">
    <property type="glycosylation" value="3 sites, 1 O-linked glycan (2 sites)"/>
</dbReference>
<dbReference type="iPTMnet" id="Q9BXJ3"/>
<dbReference type="PhosphoSitePlus" id="Q9BXJ3"/>
<dbReference type="BioMuta" id="C1QTNF4"/>
<dbReference type="DMDM" id="116241274"/>
<dbReference type="MassIVE" id="Q9BXJ3"/>
<dbReference type="PaxDb" id="9606-ENSP00000302274"/>
<dbReference type="PeptideAtlas" id="Q9BXJ3"/>
<dbReference type="ProteomicsDB" id="79435"/>
<dbReference type="Antibodypedia" id="13803">
    <property type="antibodies" value="173 antibodies from 30 providers"/>
</dbReference>
<dbReference type="DNASU" id="114900"/>
<dbReference type="Ensembl" id="ENST00000302514.4">
    <property type="protein sequence ID" value="ENSP00000302274.3"/>
    <property type="gene ID" value="ENSG00000172247.4"/>
</dbReference>
<dbReference type="Ensembl" id="ENST00000642567.2">
    <property type="protein sequence ID" value="ENSP00000496508.1"/>
    <property type="gene ID" value="ENSG00000284838.2"/>
</dbReference>
<dbReference type="GeneID" id="114900"/>
<dbReference type="KEGG" id="hsa:114900"/>
<dbReference type="MANE-Select" id="ENST00000302514.4">
    <property type="protein sequence ID" value="ENSP00000302274.3"/>
    <property type="RefSeq nucleotide sequence ID" value="NM_031909.3"/>
    <property type="RefSeq protein sequence ID" value="NP_114115.2"/>
</dbReference>
<dbReference type="UCSC" id="uc001ngc.3">
    <property type="organism name" value="human"/>
</dbReference>
<dbReference type="AGR" id="HGNC:14346"/>
<dbReference type="CTD" id="114900"/>
<dbReference type="DisGeNET" id="114900"/>
<dbReference type="GeneCards" id="C1QTNF4"/>
<dbReference type="HGNC" id="HGNC:14346">
    <property type="gene designation" value="C1QTNF4"/>
</dbReference>
<dbReference type="HPA" id="ENSG00000172247">
    <property type="expression patterns" value="Tissue enriched (brain)"/>
</dbReference>
<dbReference type="MIM" id="614911">
    <property type="type" value="gene"/>
</dbReference>
<dbReference type="neXtProt" id="NX_Q9BXJ3"/>
<dbReference type="OpenTargets" id="ENSG00000172247"/>
<dbReference type="PharmGKB" id="PA25631"/>
<dbReference type="VEuPathDB" id="HostDB:ENSG00000172247"/>
<dbReference type="eggNOG" id="ENOG502QX94">
    <property type="taxonomic scope" value="Eukaryota"/>
</dbReference>
<dbReference type="GeneTree" id="ENSGT00940000161832"/>
<dbReference type="HOGENOM" id="CLU_048377_0_0_1"/>
<dbReference type="InParanoid" id="Q9BXJ3"/>
<dbReference type="OMA" id="GTDEKQT"/>
<dbReference type="OrthoDB" id="6058225at2759"/>
<dbReference type="PAN-GO" id="Q9BXJ3">
    <property type="GO annotations" value="1 GO annotation based on evolutionary models"/>
</dbReference>
<dbReference type="PhylomeDB" id="Q9BXJ3"/>
<dbReference type="TreeFam" id="TF329591"/>
<dbReference type="PathwayCommons" id="Q9BXJ3"/>
<dbReference type="SignaLink" id="Q9BXJ3"/>
<dbReference type="BioGRID-ORCS" id="114900">
    <property type="hits" value="177 hits in 1146 CRISPR screens"/>
</dbReference>
<dbReference type="GenomeRNAi" id="114900"/>
<dbReference type="Pharos" id="Q9BXJ3">
    <property type="development level" value="Tbio"/>
</dbReference>
<dbReference type="PRO" id="PR:Q9BXJ3"/>
<dbReference type="Proteomes" id="UP000005640">
    <property type="component" value="Chromosome 11"/>
</dbReference>
<dbReference type="RNAct" id="Q9BXJ3">
    <property type="molecule type" value="protein"/>
</dbReference>
<dbReference type="Bgee" id="ENSG00000172247">
    <property type="expression patterns" value="Expressed in primary visual cortex and 91 other cell types or tissues"/>
</dbReference>
<dbReference type="ExpressionAtlas" id="Q9BXJ3">
    <property type="expression patterns" value="baseline and differential"/>
</dbReference>
<dbReference type="GO" id="GO:0005615">
    <property type="term" value="C:extracellular space"/>
    <property type="evidence" value="ECO:0000314"/>
    <property type="project" value="UniProtKB"/>
</dbReference>
<dbReference type="GO" id="GO:0005125">
    <property type="term" value="F:cytokine activity"/>
    <property type="evidence" value="ECO:0007669"/>
    <property type="project" value="UniProtKB-KW"/>
</dbReference>
<dbReference type="GO" id="GO:0097696">
    <property type="term" value="P:cell surface receptor signaling pathway via STAT"/>
    <property type="evidence" value="ECO:0007669"/>
    <property type="project" value="Ensembl"/>
</dbReference>
<dbReference type="GO" id="GO:0010467">
    <property type="term" value="P:gene expression"/>
    <property type="evidence" value="ECO:0007669"/>
    <property type="project" value="Ensembl"/>
</dbReference>
<dbReference type="GO" id="GO:0032755">
    <property type="term" value="P:positive regulation of interleukin-6 production"/>
    <property type="evidence" value="ECO:0000314"/>
    <property type="project" value="UniProtKB"/>
</dbReference>
<dbReference type="GO" id="GO:0070105">
    <property type="term" value="P:positive regulation of interleukin-6-mediated signaling pathway"/>
    <property type="evidence" value="ECO:0000314"/>
    <property type="project" value="UniProtKB"/>
</dbReference>
<dbReference type="GO" id="GO:1901224">
    <property type="term" value="P:positive regulation of non-canonical NF-kappaB signal transduction"/>
    <property type="evidence" value="ECO:0000314"/>
    <property type="project" value="UniProtKB"/>
</dbReference>
<dbReference type="GO" id="GO:0032760">
    <property type="term" value="P:positive regulation of tumor necrosis factor production"/>
    <property type="evidence" value="ECO:0000314"/>
    <property type="project" value="UniProtKB"/>
</dbReference>
<dbReference type="GO" id="GO:0002023">
    <property type="term" value="P:reduction of food intake in response to dietary excess"/>
    <property type="evidence" value="ECO:0007669"/>
    <property type="project" value="Ensembl"/>
</dbReference>
<dbReference type="FunFam" id="2.60.120.40:FF:000020">
    <property type="entry name" value="complement C1q tumor necrosis factor-related protein 4"/>
    <property type="match status" value="2"/>
</dbReference>
<dbReference type="Gene3D" id="2.60.120.40">
    <property type="match status" value="2"/>
</dbReference>
<dbReference type="InterPro" id="IPR001073">
    <property type="entry name" value="C1q_dom"/>
</dbReference>
<dbReference type="InterPro" id="IPR050822">
    <property type="entry name" value="Cerebellin_Synaptic_Org"/>
</dbReference>
<dbReference type="InterPro" id="IPR008983">
    <property type="entry name" value="Tumour_necrosis_fac-like_dom"/>
</dbReference>
<dbReference type="PANTHER" id="PTHR22923">
    <property type="entry name" value="CEREBELLIN-RELATED"/>
    <property type="match status" value="1"/>
</dbReference>
<dbReference type="PANTHER" id="PTHR22923:SF118">
    <property type="entry name" value="COMPLEMENT C1Q TUMOR NECROSIS FACTOR-RELATED PROTEIN 4"/>
    <property type="match status" value="1"/>
</dbReference>
<dbReference type="Pfam" id="PF00386">
    <property type="entry name" value="C1q"/>
    <property type="match status" value="2"/>
</dbReference>
<dbReference type="PRINTS" id="PR00007">
    <property type="entry name" value="COMPLEMNTC1Q"/>
</dbReference>
<dbReference type="SMART" id="SM00110">
    <property type="entry name" value="C1Q"/>
    <property type="match status" value="2"/>
</dbReference>
<dbReference type="SUPFAM" id="SSF49842">
    <property type="entry name" value="TNF-like"/>
    <property type="match status" value="2"/>
</dbReference>
<dbReference type="PROSITE" id="PS50871">
    <property type="entry name" value="C1Q"/>
    <property type="match status" value="2"/>
</dbReference>
<name>C1QT4_HUMAN</name>
<protein>
    <recommendedName>
        <fullName>Complement C1q tumor necrosis factor-related protein 4</fullName>
    </recommendedName>
    <alternativeName>
        <fullName evidence="9">C1q/TNF-related protein 4</fullName>
    </alternativeName>
</protein>
<feature type="signal peptide" evidence="4">
    <location>
        <begin position="1"/>
        <end position="16"/>
    </location>
</feature>
<feature type="chain" id="PRO_0000003533" description="Complement C1q tumor necrosis factor-related protein 4">
    <location>
        <begin position="17"/>
        <end position="329"/>
    </location>
</feature>
<feature type="domain" description="C1q 1" evidence="2">
    <location>
        <begin position="25"/>
        <end position="162"/>
    </location>
</feature>
<feature type="domain" description="C1q 2" evidence="2">
    <location>
        <begin position="172"/>
        <end position="317"/>
    </location>
</feature>
<feature type="region of interest" description="Disordered" evidence="3">
    <location>
        <begin position="164"/>
        <end position="195"/>
    </location>
</feature>
<feature type="sequence variant" id="VAR_081086" description="Found in a patient with systemic lupus erythematosus; uncertain significance; inhibits TNF-mediated NF-kB activation." evidence="7">
    <original>H</original>
    <variation>Q</variation>
    <location>
        <position position="198"/>
    </location>
</feature>
<feature type="sequence variant" id="VAR_081087" description="Found in a patient with autosomal recessive retinitis pigmentosa; uncertain significance; dbSNP:rs1418830230." evidence="8">
    <original>G</original>
    <variation>D</variation>
    <location>
        <position position="301"/>
    </location>
</feature>
<feature type="sequence conflict" description="In Ref. 1; AAK17962." evidence="10" ref="1">
    <original>Q</original>
    <variation>H</variation>
    <location>
        <position position="141"/>
    </location>
</feature>
<gene>
    <name type="primary">C1QTNF4</name>
    <name type="synonym">CTRP4</name>
</gene>
<comment type="function">
    <text evidence="1 4 6">May be involved in the regulation of the inflammatory network. Its role as pro- or anti-inflammatory seems to be context dependent (PubMed:21658842, PubMed:27086950). Seems to have some role in regulating food intake and energy balance when administered in the brain. This effect is sustained over a two-day period, and it is accompanied by decreased expression of orexigenic neuropeptides in the hypothalamus 3 hours post-injection (By similarity).</text>
</comment>
<comment type="subunit">
    <text evidence="1">Homomultimer. Forms trimers, hexamers and high molecular weight oligomers (By similarity).</text>
</comment>
<comment type="interaction">
    <interactant intactId="EBI-11955105">
        <id>Q9BXJ3</id>
    </interactant>
    <interactant intactId="EBI-11985629">
        <id>Q96JM7-2</id>
        <label>L3MBTL3</label>
    </interactant>
    <organismsDiffer>false</organismsDiffer>
    <experiments>3</experiments>
</comment>
<comment type="interaction">
    <interactant intactId="EBI-11955105">
        <id>Q9BXJ3</id>
    </interactant>
    <interactant intactId="EBI-11139477">
        <id>Q96N21</id>
        <label>TEPSIN</label>
    </interactant>
    <organismsDiffer>false</organismsDiffer>
    <experiments>3</experiments>
</comment>
<comment type="interaction">
    <interactant intactId="EBI-11955105">
        <id>Q9BXJ3</id>
    </interactant>
    <interactant intactId="EBI-741480">
        <id>Q9UMX0</id>
        <label>UBQLN1</label>
    </interactant>
    <organismsDiffer>false</organismsDiffer>
    <experiments>3</experiments>
</comment>
<comment type="interaction">
    <interactant intactId="EBI-11955105">
        <id>Q9BXJ3</id>
    </interactant>
    <interactant intactId="EBI-947187">
        <id>Q9UHD9</id>
        <label>UBQLN2</label>
    </interactant>
    <organismsDiffer>false</organismsDiffer>
    <experiments>3</experiments>
</comment>
<comment type="subcellular location">
    <subcellularLocation>
        <location evidence="4">Secreted</location>
    </subcellularLocation>
</comment>
<comment type="tissue specificity">
    <text evidence="4 5">Widely expressed at low levels (PubMed:21658842). Highest levels in adipocyte tissue and brain (PubMed:24366864).</text>
</comment>
<comment type="induction">
    <text evidence="4">Up-regulated by IL6.</text>
</comment>
<comment type="caution">
    <text evidence="4 6">There are conflicting results in its involvement in the inflammatory network. It was first described to be a pro-inflammatory cytokine by inducing the activation of NF-kappa-B signaling pathway and up-regulates IL6 production in liver carcinoma cells (PubMed:21658842). While it seems to have the opposite effect in macrophages (PubMed:27086950).</text>
</comment>
<comment type="caution">
    <text evidence="1">Involvement in food intake and energy was only observed when the protein was externally administered in the brain, but not when this protein was overexpressed in vivo.</text>
</comment>
<reference key="1">
    <citation type="submission" date="2000-12" db="EMBL/GenBank/DDBJ databases">
        <title>Homo sapiens complement-c1q tumor necrosis factor-related protein.</title>
        <authorList>
            <person name="Holloway J.L."/>
            <person name="Lok S."/>
        </authorList>
    </citation>
    <scope>NUCLEOTIDE SEQUENCE [MRNA]</scope>
</reference>
<reference key="2">
    <citation type="journal article" date="2004" name="Genome Res.">
        <title>The status, quality, and expansion of the NIH full-length cDNA project: the Mammalian Gene Collection (MGC).</title>
        <authorList>
            <consortium name="The MGC Project Team"/>
        </authorList>
    </citation>
    <scope>NUCLEOTIDE SEQUENCE [LARGE SCALE MRNA]</scope>
    <source>
        <tissue>Brain</tissue>
    </source>
</reference>
<reference key="3">
    <citation type="journal article" date="2011" name="Cancer Lett.">
        <title>Identification of C1qTNF-related protein 4 as a potential cytokine that stimulates the STAT3 and NF-kappaB pathways and promotes cell survival in human cancer cells.</title>
        <authorList>
            <person name="Li Q."/>
            <person name="Wang L."/>
            <person name="Tan W."/>
            <person name="Peng Z."/>
            <person name="Luo Y."/>
            <person name="Zhang Y."/>
            <person name="Zhang G."/>
            <person name="Na D."/>
            <person name="Jin P."/>
            <person name="Shi T."/>
            <person name="Ma D."/>
            <person name="Wang L."/>
        </authorList>
    </citation>
    <scope>PROTEIN SEQUENCE OF N-TERMINUS</scope>
    <scope>FUNCTION</scope>
    <scope>SUBCELLULAR LOCATION</scope>
    <scope>INDUCTION</scope>
    <scope>TISSUE SPECIFICITY</scope>
    <scope>CAUTION</scope>
</reference>
<reference key="4">
    <citation type="journal article" date="2014" name="J. Biol. Chem.">
        <title>C1q/TNF-related protein 4 (CTRP4) is a unique secreted protein with two tandem C1q domains that functions in the hypothalamus to modulate food intake and body weight.</title>
        <authorList>
            <person name="Byerly M.S."/>
            <person name="Petersen P.S."/>
            <person name="Ramamurthy S."/>
            <person name="Seldin M.M."/>
            <person name="Lei X."/>
            <person name="Provost E."/>
            <person name="Wei Z."/>
            <person name="Ronnett G.V."/>
            <person name="Wong G.W."/>
        </authorList>
    </citation>
    <scope>TISSUE SPECIFICITY</scope>
</reference>
<reference key="5">
    <citation type="journal article" date="2016" name="Cell. Mol. Immunol.">
        <title>Expression of the novel adipokine C1qTNF-related protein 4 (CTRP4) suppresses colitis and colitis-associated colorectal cancer in mice.</title>
        <authorList>
            <person name="Luo Y."/>
            <person name="Wu X."/>
            <person name="Ma Z."/>
            <person name="Tan W."/>
            <person name="Wang L."/>
            <person name="Na D."/>
            <person name="Zhang G."/>
            <person name="Yin A."/>
            <person name="Huang H."/>
            <person name="Xia D."/>
            <person name="Zhang Y."/>
            <person name="Shi X."/>
            <person name="Wang L."/>
        </authorList>
    </citation>
    <scope>FUNCTION</scope>
    <scope>CAUTION</scope>
</reference>
<reference key="6">
    <citation type="journal article" date="2018" name="Hum. Mol. Genet.">
        <title>De novo mutations implicate novel genes in systemic lupus erythematosus.</title>
        <authorList>
            <person name="Pullabhatla V."/>
            <person name="Roberts A.L."/>
            <person name="Lewis M.J."/>
            <person name="Mauro D."/>
            <person name="Morris D.L."/>
            <person name="Odhams C.A."/>
            <person name="Tombleson P."/>
            <person name="Liljedahl U."/>
            <person name="Vyse S."/>
            <person name="Simpson M.A."/>
            <person name="Sauer S."/>
            <person name="de Rinaldis E."/>
            <person name="Syvaenen A.C."/>
            <person name="Vyse T.J."/>
        </authorList>
    </citation>
    <scope>VARIANT GLN-198</scope>
    <scope>CHARACTERIZATION OF VARIANT GLN-198</scope>
</reference>
<reference key="7">
    <citation type="journal article" date="2018" name="Adv. Exp. Med. Biol.">
        <title>Whole-Exome Sequencing Identifies Novel Variants that Co-segregates with Autosomal Recessive Retinal Degeneration in a Pakistani Pedigree.</title>
        <authorList>
            <person name="Biswas P."/>
            <person name="Naeem M.A."/>
            <person name="Ali M.H."/>
            <person name="Assir M.Z."/>
            <person name="Khan S.N."/>
            <person name="Riazuddin S."/>
            <person name="Hejtmancik J.F."/>
            <person name="Riazuddin S.A."/>
            <person name="Ayyagari R."/>
        </authorList>
    </citation>
    <scope>VARIANT ASP-301</scope>
</reference>
<keyword id="KW-0202">Cytokine</keyword>
<keyword id="KW-0903">Direct protein sequencing</keyword>
<keyword id="KW-1267">Proteomics identification</keyword>
<keyword id="KW-1185">Reference proteome</keyword>
<keyword id="KW-0677">Repeat</keyword>
<keyword id="KW-0964">Secreted</keyword>
<keyword id="KW-0732">Signal</keyword>
<proteinExistence type="evidence at protein level"/>
<sequence length="329" mass="35256">MLPLLLGLLGPAACWALGPTPGPGSSELRSAFSAARTTPLEGTSEMAVTFDKVYVNIGGDFDVATGQFRCRVPGAYFFSFTAGKAPHKSLSVMLVRNRDEVQALAFDEQRRPGARRAASQSAMLQLDYGDTVWLRLHGAPQYALGAPGATFSGYLVYADADADAPARGPPAPPEPRSAFSAARTRSLVGSDAGPGPRHQPLAFDTEFVNIGGDFDAAAGVFRCRLPGAYFFSFTLGKLPRKTLSVKLMKNRDEVQAMIYDDGASRRREMQSQSVMLALRRGDAVWLLSHDHDGYGAYSNHGKYITFSGFLVYPDLAPAAPPGLGASELL</sequence>
<organism>
    <name type="scientific">Homo sapiens</name>
    <name type="common">Human</name>
    <dbReference type="NCBI Taxonomy" id="9606"/>
    <lineage>
        <taxon>Eukaryota</taxon>
        <taxon>Metazoa</taxon>
        <taxon>Chordata</taxon>
        <taxon>Craniata</taxon>
        <taxon>Vertebrata</taxon>
        <taxon>Euteleostomi</taxon>
        <taxon>Mammalia</taxon>
        <taxon>Eutheria</taxon>
        <taxon>Euarchontoglires</taxon>
        <taxon>Primates</taxon>
        <taxon>Haplorrhini</taxon>
        <taxon>Catarrhini</taxon>
        <taxon>Hominidae</taxon>
        <taxon>Homo</taxon>
    </lineage>
</organism>
<accession>Q9BXJ3</accession>
<accession>Q8IV25</accession>